<proteinExistence type="evidence at transcript level"/>
<organism>
    <name type="scientific">Rattus norvegicus</name>
    <name type="common">Rat</name>
    <dbReference type="NCBI Taxonomy" id="10116"/>
    <lineage>
        <taxon>Eukaryota</taxon>
        <taxon>Metazoa</taxon>
        <taxon>Chordata</taxon>
        <taxon>Craniata</taxon>
        <taxon>Vertebrata</taxon>
        <taxon>Euteleostomi</taxon>
        <taxon>Mammalia</taxon>
        <taxon>Eutheria</taxon>
        <taxon>Euarchontoglires</taxon>
        <taxon>Glires</taxon>
        <taxon>Rodentia</taxon>
        <taxon>Myomorpha</taxon>
        <taxon>Muroidea</taxon>
        <taxon>Muridae</taxon>
        <taxon>Murinae</taxon>
        <taxon>Rattus</taxon>
    </lineage>
</organism>
<evidence type="ECO:0000250" key="1"/>
<evidence type="ECO:0000250" key="2">
    <source>
        <dbReference type="UniProtKB" id="O60930"/>
    </source>
</evidence>
<evidence type="ECO:0000255" key="3">
    <source>
        <dbReference type="PROSITE-ProRule" id="PRU00408"/>
    </source>
</evidence>
<evidence type="ECO:0000256" key="4">
    <source>
        <dbReference type="SAM" id="MobiDB-lite"/>
    </source>
</evidence>
<evidence type="ECO:0000305" key="5"/>
<sequence>MRWLLPLFRTVTLAVVRVRRGVCGLGMFYAVRRGRRTGVFLSWSECKAQVDRFPAARFKKFATEDEAWAFVRSSSSPDGSKGQESAHVQKLQVKTSKRPREPLGEEEEPPEPGAKHTRQDTEPAALVSKDAFSYMGESVVVYTDGCCSSNGRKRARAGIGVYWGPGHPLNVGIRLPGRQTNQRAEIHAACKAITQAKAQNISKLVLYTDSMFTINGITNWVQGWKKNGWRTSTGKDVINKEDFMELDELTQGMDIQWMHIPGHSGFVGNEEADRLAREGAKQSEG</sequence>
<gene>
    <name type="primary">Rnaseh1</name>
</gene>
<dbReference type="EC" id="3.1.26.4"/>
<dbReference type="EMBL" id="BC091209">
    <property type="protein sequence ID" value="AAH91209.1"/>
    <property type="molecule type" value="mRNA"/>
</dbReference>
<dbReference type="RefSeq" id="NP_001013115.1">
    <property type="nucleotide sequence ID" value="NM_001013097.2"/>
</dbReference>
<dbReference type="RefSeq" id="NP_001273867.1">
    <property type="nucleotide sequence ID" value="NM_001286938.1"/>
</dbReference>
<dbReference type="SMR" id="Q5BK46"/>
<dbReference type="FunCoup" id="Q5BK46">
    <property type="interactions" value="2453"/>
</dbReference>
<dbReference type="STRING" id="10116.ENSRNOP00000011819"/>
<dbReference type="PhosphoSitePlus" id="Q5BK46"/>
<dbReference type="PaxDb" id="10116-ENSRNOP00000011819"/>
<dbReference type="Ensembl" id="ENSRNOT00000011819.7">
    <property type="protein sequence ID" value="ENSRNOP00000011819.4"/>
    <property type="gene ID" value="ENSRNOG00000008584.8"/>
</dbReference>
<dbReference type="GeneID" id="298933"/>
<dbReference type="KEGG" id="rno:298933"/>
<dbReference type="AGR" id="RGD:1309012"/>
<dbReference type="CTD" id="246243"/>
<dbReference type="RGD" id="1309012">
    <property type="gene designation" value="Rnaseh1"/>
</dbReference>
<dbReference type="eggNOG" id="KOG3752">
    <property type="taxonomic scope" value="Eukaryota"/>
</dbReference>
<dbReference type="GeneTree" id="ENSGT00390000003466"/>
<dbReference type="HOGENOM" id="CLU_030894_0_2_1"/>
<dbReference type="InParanoid" id="Q5BK46"/>
<dbReference type="OMA" id="ELWYGLY"/>
<dbReference type="OrthoDB" id="407198at2759"/>
<dbReference type="PhylomeDB" id="Q5BK46"/>
<dbReference type="TreeFam" id="TF313356"/>
<dbReference type="PRO" id="PR:Q5BK46"/>
<dbReference type="Proteomes" id="UP000002494">
    <property type="component" value="Chromosome 6"/>
</dbReference>
<dbReference type="Bgee" id="ENSRNOG00000008584">
    <property type="expression patterns" value="Expressed in thymus and 20 other cell types or tissues"/>
</dbReference>
<dbReference type="GO" id="GO:0005739">
    <property type="term" value="C:mitochondrion"/>
    <property type="evidence" value="ECO:0000266"/>
    <property type="project" value="RGD"/>
</dbReference>
<dbReference type="GO" id="GO:0005634">
    <property type="term" value="C:nucleus"/>
    <property type="evidence" value="ECO:0000266"/>
    <property type="project" value="RGD"/>
</dbReference>
<dbReference type="GO" id="GO:0042802">
    <property type="term" value="F:identical protein binding"/>
    <property type="evidence" value="ECO:0000266"/>
    <property type="project" value="RGD"/>
</dbReference>
<dbReference type="GO" id="GO:0000287">
    <property type="term" value="F:magnesium ion binding"/>
    <property type="evidence" value="ECO:0007669"/>
    <property type="project" value="InterPro"/>
</dbReference>
<dbReference type="GO" id="GO:0003676">
    <property type="term" value="F:nucleic acid binding"/>
    <property type="evidence" value="ECO:0007669"/>
    <property type="project" value="InterPro"/>
</dbReference>
<dbReference type="GO" id="GO:0004523">
    <property type="term" value="F:RNA-DNA hybrid ribonuclease activity"/>
    <property type="evidence" value="ECO:0000250"/>
    <property type="project" value="UniProtKB"/>
</dbReference>
<dbReference type="GO" id="GO:0043137">
    <property type="term" value="P:DNA replication, removal of RNA primer"/>
    <property type="evidence" value="ECO:0000318"/>
    <property type="project" value="GO_Central"/>
</dbReference>
<dbReference type="GO" id="GO:0006264">
    <property type="term" value="P:mitochondrial DNA replication"/>
    <property type="evidence" value="ECO:0000266"/>
    <property type="project" value="RGD"/>
</dbReference>
<dbReference type="CDD" id="cd09280">
    <property type="entry name" value="RNase_HI_eukaryote_like"/>
    <property type="match status" value="1"/>
</dbReference>
<dbReference type="FunFam" id="3.30.420.10:FF:000049">
    <property type="entry name" value="Ribonuclease H1"/>
    <property type="match status" value="1"/>
</dbReference>
<dbReference type="FunFam" id="3.40.970.10:FF:000001">
    <property type="entry name" value="Ribonuclease H1"/>
    <property type="match status" value="1"/>
</dbReference>
<dbReference type="Gene3D" id="3.30.420.10">
    <property type="entry name" value="Ribonuclease H-like superfamily/Ribonuclease H"/>
    <property type="match status" value="1"/>
</dbReference>
<dbReference type="Gene3D" id="3.40.970.10">
    <property type="entry name" value="Ribonuclease H1, N-terminal domain"/>
    <property type="match status" value="1"/>
</dbReference>
<dbReference type="InterPro" id="IPR009027">
    <property type="entry name" value="Ribosomal_bL9/RNase_H1_N"/>
</dbReference>
<dbReference type="InterPro" id="IPR050092">
    <property type="entry name" value="RNase_H"/>
</dbReference>
<dbReference type="InterPro" id="IPR017067">
    <property type="entry name" value="RNase_H1_euk"/>
</dbReference>
<dbReference type="InterPro" id="IPR011320">
    <property type="entry name" value="RNase_H1_N"/>
</dbReference>
<dbReference type="InterPro" id="IPR037056">
    <property type="entry name" value="RNase_H1_N_sf"/>
</dbReference>
<dbReference type="InterPro" id="IPR012337">
    <property type="entry name" value="RNaseH-like_sf"/>
</dbReference>
<dbReference type="InterPro" id="IPR002156">
    <property type="entry name" value="RNaseH_domain"/>
</dbReference>
<dbReference type="InterPro" id="IPR036397">
    <property type="entry name" value="RNaseH_sf"/>
</dbReference>
<dbReference type="PANTHER" id="PTHR10642">
    <property type="entry name" value="RIBONUCLEASE H1"/>
    <property type="match status" value="1"/>
</dbReference>
<dbReference type="PANTHER" id="PTHR10642:SF26">
    <property type="entry name" value="RIBONUCLEASE H1"/>
    <property type="match status" value="1"/>
</dbReference>
<dbReference type="Pfam" id="PF01693">
    <property type="entry name" value="Cauli_VI"/>
    <property type="match status" value="1"/>
</dbReference>
<dbReference type="Pfam" id="PF00075">
    <property type="entry name" value="RNase_H"/>
    <property type="match status" value="1"/>
</dbReference>
<dbReference type="PIRSF" id="PIRSF036852">
    <property type="entry name" value="Ribonuclease_H1_euk"/>
    <property type="match status" value="1"/>
</dbReference>
<dbReference type="SUPFAM" id="SSF55658">
    <property type="entry name" value="L9 N-domain-like"/>
    <property type="match status" value="1"/>
</dbReference>
<dbReference type="SUPFAM" id="SSF53098">
    <property type="entry name" value="Ribonuclease H-like"/>
    <property type="match status" value="1"/>
</dbReference>
<dbReference type="PROSITE" id="PS50879">
    <property type="entry name" value="RNASE_H_1"/>
    <property type="match status" value="1"/>
</dbReference>
<accession>Q5BK46</accession>
<keyword id="KW-0963">Cytoplasm</keyword>
<keyword id="KW-0255">Endonuclease</keyword>
<keyword id="KW-0378">Hydrolase</keyword>
<keyword id="KW-0460">Magnesium</keyword>
<keyword id="KW-0479">Metal-binding</keyword>
<keyword id="KW-0540">Nuclease</keyword>
<keyword id="KW-1185">Reference proteome</keyword>
<name>RNH1_RAT</name>
<protein>
    <recommendedName>
        <fullName>Ribonuclease H1</fullName>
        <shortName>RNase H1</shortName>
        <ecNumber>3.1.26.4</ecNumber>
    </recommendedName>
</protein>
<reference key="1">
    <citation type="journal article" date="2004" name="Genome Res.">
        <title>The status, quality, and expansion of the NIH full-length cDNA project: the Mammalian Gene Collection (MGC).</title>
        <authorList>
            <consortium name="The MGC Project Team"/>
        </authorList>
    </citation>
    <scope>NUCLEOTIDE SEQUENCE [LARGE SCALE MRNA]</scope>
    <source>
        <tissue>Thymus</tissue>
    </source>
</reference>
<feature type="chain" id="PRO_0000195435" description="Ribonuclease H1">
    <location>
        <begin position="1"/>
        <end position="285"/>
    </location>
</feature>
<feature type="domain" description="RNase H type-1" evidence="3">
    <location>
        <begin position="135"/>
        <end position="281"/>
    </location>
</feature>
<feature type="region of interest" description="Disordered" evidence="4">
    <location>
        <begin position="72"/>
        <end position="122"/>
    </location>
</feature>
<feature type="binding site" evidence="3">
    <location>
        <position position="144"/>
    </location>
    <ligand>
        <name>Mg(2+)</name>
        <dbReference type="ChEBI" id="CHEBI:18420"/>
        <label>1</label>
    </ligand>
</feature>
<feature type="binding site" evidence="3">
    <location>
        <position position="144"/>
    </location>
    <ligand>
        <name>Mg(2+)</name>
        <dbReference type="ChEBI" id="CHEBI:18420"/>
        <label>2</label>
    </ligand>
</feature>
<feature type="binding site" evidence="3">
    <location>
        <position position="185"/>
    </location>
    <ligand>
        <name>Mg(2+)</name>
        <dbReference type="ChEBI" id="CHEBI:18420"/>
        <label>1</label>
    </ligand>
</feature>
<feature type="binding site" evidence="3">
    <location>
        <position position="209"/>
    </location>
    <ligand>
        <name>Mg(2+)</name>
        <dbReference type="ChEBI" id="CHEBI:18420"/>
        <label>1</label>
    </ligand>
</feature>
<feature type="binding site" evidence="3">
    <location>
        <position position="273"/>
    </location>
    <ligand>
        <name>Mg(2+)</name>
        <dbReference type="ChEBI" id="CHEBI:18420"/>
        <label>2</label>
    </ligand>
</feature>
<comment type="function">
    <text evidence="2">Endonuclease that specifically degrades the RNA of RNA-DNA hybrids. Plays a role in RNA polymerase II (RNAp II) transcription termination by degrading R-loop RNA-DNA hybrid formation at G-rich pause sites located downstream of the poly(A) site and behind the elongating RNAp II.</text>
</comment>
<comment type="catalytic activity">
    <reaction evidence="3">
        <text>Endonucleolytic cleavage to 5'-phosphomonoester.</text>
        <dbReference type="EC" id="3.1.26.4"/>
    </reaction>
</comment>
<comment type="cofactor">
    <cofactor evidence="1">
        <name>Mg(2+)</name>
        <dbReference type="ChEBI" id="CHEBI:18420"/>
    </cofactor>
    <text evidence="1">Binds 1 Mg(2+) ion per subunit. May bind a second metal ion at a regulatory site, or after substrate binding.</text>
</comment>
<comment type="activity regulation">
    <text evidence="1">In the presence of magnesium, manganese is inhibitory.</text>
</comment>
<comment type="subunit">
    <text evidence="1">Monomer.</text>
</comment>
<comment type="subcellular location">
    <subcellularLocation>
        <location evidence="5">Cytoplasm</location>
    </subcellularLocation>
</comment>
<comment type="similarity">
    <text evidence="5">Belongs to the RNase H family.</text>
</comment>